<gene>
    <name type="ordered locus">Os03g0843600</name>
    <name type="ordered locus">LOC_Os03g62650</name>
    <name type="ORF">OSJNBa0032G11.8</name>
</gene>
<proteinExistence type="evidence at transcript level"/>
<reference key="1">
    <citation type="journal article" date="2005" name="Genome Res.">
        <title>Sequence, annotation, and analysis of synteny between rice chromosome 3 and diverged grass species.</title>
        <authorList>
            <consortium name="The rice chromosome 3 sequencing consortium"/>
            <person name="Buell C.R."/>
            <person name="Yuan Q."/>
            <person name="Ouyang S."/>
            <person name="Liu J."/>
            <person name="Zhu W."/>
            <person name="Wang A."/>
            <person name="Maiti R."/>
            <person name="Haas B."/>
            <person name="Wortman J."/>
            <person name="Pertea M."/>
            <person name="Jones K.M."/>
            <person name="Kim M."/>
            <person name="Overton L."/>
            <person name="Tsitrin T."/>
            <person name="Fadrosh D."/>
            <person name="Bera J."/>
            <person name="Weaver B."/>
            <person name="Jin S."/>
            <person name="Johri S."/>
            <person name="Reardon M."/>
            <person name="Webb K."/>
            <person name="Hill J."/>
            <person name="Moffat K."/>
            <person name="Tallon L."/>
            <person name="Van Aken S."/>
            <person name="Lewis M."/>
            <person name="Utterback T."/>
            <person name="Feldblyum T."/>
            <person name="Zismann V."/>
            <person name="Iobst S."/>
            <person name="Hsiao J."/>
            <person name="de Vazeille A.R."/>
            <person name="Salzberg S.L."/>
            <person name="White O."/>
            <person name="Fraser C.M."/>
            <person name="Yu Y."/>
            <person name="Kim H."/>
            <person name="Rambo T."/>
            <person name="Currie J."/>
            <person name="Collura K."/>
            <person name="Kernodle-Thompson S."/>
            <person name="Wei F."/>
            <person name="Kudrna K."/>
            <person name="Ammiraju J.S.S."/>
            <person name="Luo M."/>
            <person name="Goicoechea J.L."/>
            <person name="Wing R.A."/>
            <person name="Henry D."/>
            <person name="Oates R."/>
            <person name="Palmer M."/>
            <person name="Pries G."/>
            <person name="Saski C."/>
            <person name="Simmons J."/>
            <person name="Soderlund C."/>
            <person name="Nelson W."/>
            <person name="de la Bastide M."/>
            <person name="Spiegel L."/>
            <person name="Nascimento L."/>
            <person name="Huang E."/>
            <person name="Preston R."/>
            <person name="Zutavern T."/>
            <person name="Palmer L."/>
            <person name="O'Shaughnessy A."/>
            <person name="Dike S."/>
            <person name="McCombie W.R."/>
            <person name="Minx P."/>
            <person name="Cordum H."/>
            <person name="Wilson R."/>
            <person name="Jin W."/>
            <person name="Lee H.R."/>
            <person name="Jiang J."/>
            <person name="Jackson S."/>
        </authorList>
    </citation>
    <scope>NUCLEOTIDE SEQUENCE [LARGE SCALE GENOMIC DNA]</scope>
    <source>
        <strain>cv. Nipponbare</strain>
    </source>
</reference>
<reference key="2">
    <citation type="journal article" date="2005" name="Nature">
        <title>The map-based sequence of the rice genome.</title>
        <authorList>
            <consortium name="International rice genome sequencing project (IRGSP)"/>
        </authorList>
    </citation>
    <scope>NUCLEOTIDE SEQUENCE [LARGE SCALE GENOMIC DNA]</scope>
    <source>
        <strain>cv. Nipponbare</strain>
    </source>
</reference>
<reference key="3">
    <citation type="journal article" date="2008" name="Nucleic Acids Res.">
        <title>The rice annotation project database (RAP-DB): 2008 update.</title>
        <authorList>
            <consortium name="The rice annotation project (RAP)"/>
        </authorList>
    </citation>
    <scope>GENOME REANNOTATION</scope>
    <source>
        <strain>cv. Nipponbare</strain>
    </source>
</reference>
<reference key="4">
    <citation type="journal article" date="2013" name="Rice">
        <title>Improvement of the Oryza sativa Nipponbare reference genome using next generation sequence and optical map data.</title>
        <authorList>
            <person name="Kawahara Y."/>
            <person name="de la Bastide M."/>
            <person name="Hamilton J.P."/>
            <person name="Kanamori H."/>
            <person name="McCombie W.R."/>
            <person name="Ouyang S."/>
            <person name="Schwartz D.C."/>
            <person name="Tanaka T."/>
            <person name="Wu J."/>
            <person name="Zhou S."/>
            <person name="Childs K.L."/>
            <person name="Davidson R.M."/>
            <person name="Lin H."/>
            <person name="Quesada-Ocampo L."/>
            <person name="Vaillancourt B."/>
            <person name="Sakai H."/>
            <person name="Lee S.S."/>
            <person name="Kim J."/>
            <person name="Numa H."/>
            <person name="Itoh T."/>
            <person name="Buell C.R."/>
            <person name="Matsumoto T."/>
        </authorList>
    </citation>
    <scope>GENOME REANNOTATION</scope>
    <source>
        <strain>cv. Nipponbare</strain>
    </source>
</reference>
<reference key="5">
    <citation type="journal article" date="2003" name="Science">
        <title>Collection, mapping, and annotation of over 28,000 cDNA clones from japonica rice.</title>
        <authorList>
            <consortium name="The rice full-length cDNA consortium"/>
        </authorList>
    </citation>
    <scope>NUCLEOTIDE SEQUENCE [LARGE SCALE MRNA]</scope>
    <source>
        <strain>cv. Nipponbare</strain>
    </source>
</reference>
<reference key="6">
    <citation type="journal article" date="2008" name="Plant Cell Physiol.">
        <title>Divergence of evolutionary ways among common sym genes: CASTOR and CCaMK show functional conservation between two symbiosis systems and constitute the root of a common signaling pathway.</title>
        <authorList>
            <person name="Banba M."/>
            <person name="Gutjahr C."/>
            <person name="Miyao A."/>
            <person name="Hirochika H."/>
            <person name="Paszkowski U."/>
            <person name="Kouchi H."/>
            <person name="Imaizumi-Anraku H."/>
        </authorList>
    </citation>
    <scope>FUNCTION</scope>
</reference>
<reference key="7">
    <citation type="journal article" date="2009" name="Plant Physiol.">
        <title>Antiquity and function of CASTOR and POLLUX, the twin ion channel-encoding genes key to the evolution of root symbioses in plants.</title>
        <authorList>
            <person name="Chen C."/>
            <person name="Fan C."/>
            <person name="Gao M."/>
            <person name="Zhu H."/>
        </authorList>
    </citation>
    <scope>FUNCTION</scope>
    <scope>TISSUE SPECIFICITY</scope>
    <scope>INDUCTION</scope>
    <scope>DISRUPTION PHENOTYPE</scope>
</reference>
<name>CASTO_ORYSJ</name>
<feature type="chain" id="PRO_0000004685" description="Probable ion channel CASTOR">
    <location>
        <begin position="1"/>
        <end position="893"/>
    </location>
</feature>
<feature type="transmembrane region" description="Helical" evidence="2">
    <location>
        <begin position="132"/>
        <end position="152"/>
    </location>
</feature>
<feature type="transmembrane region" description="Helical" evidence="2">
    <location>
        <begin position="210"/>
        <end position="230"/>
    </location>
</feature>
<feature type="transmembrane region" description="Helical" evidence="2">
    <location>
        <begin position="266"/>
        <end position="286"/>
    </location>
</feature>
<feature type="transmembrane region" description="Helical" evidence="2">
    <location>
        <begin position="318"/>
        <end position="338"/>
    </location>
</feature>
<feature type="domain" description="RCK N-terminal 1" evidence="3">
    <location>
        <begin position="359"/>
        <end position="500"/>
    </location>
</feature>
<feature type="domain" description="RCK N-terminal 2" evidence="3">
    <location>
        <begin position="619"/>
        <end position="792"/>
    </location>
</feature>
<feature type="region of interest" description="Disordered" evidence="4">
    <location>
        <begin position="1"/>
        <end position="94"/>
    </location>
</feature>
<feature type="coiled-coil region" evidence="2">
    <location>
        <begin position="156"/>
        <end position="178"/>
    </location>
</feature>
<feature type="coiled-coil region" evidence="2">
    <location>
        <begin position="389"/>
        <end position="415"/>
    </location>
</feature>
<feature type="compositionally biased region" description="Pro residues" evidence="4">
    <location>
        <begin position="65"/>
        <end position="85"/>
    </location>
</feature>
<comment type="function">
    <text evidence="5 6">Required for mycorrhizal symbiosis.</text>
</comment>
<comment type="subcellular location">
    <subcellularLocation>
        <location evidence="1">Nucleus membrane</location>
        <topology evidence="1">Multi-pass membrane protein</topology>
    </subcellularLocation>
</comment>
<comment type="tissue specificity">
    <text evidence="6">Expressed in roots, leaves, stems and panicles.</text>
</comment>
<comment type="induction">
    <text evidence="6">Not induced by mycorrhizal colonization.</text>
</comment>
<comment type="disruption phenotype">
    <text evidence="6">Defective in mycorrhizal symbiosis.</text>
</comment>
<comment type="miscellaneous">
    <text>Can restore mycorrhizal and rhizobial symbiosis in a Ljcastor mutant of Lotus japonicus.</text>
</comment>
<comment type="similarity">
    <text evidence="7">Belongs to the castor/pollux (TC 1.A.1.23) family.</text>
</comment>
<accession>Q75LD5</accession>
<accession>Q10AR8</accession>
<dbReference type="EMBL" id="AC092852">
    <property type="protein sequence ID" value="AAS07369.1"/>
    <property type="molecule type" value="Genomic_DNA"/>
</dbReference>
<dbReference type="EMBL" id="DP000009">
    <property type="protein sequence ID" value="ABF99839.1"/>
    <property type="molecule type" value="Genomic_DNA"/>
</dbReference>
<dbReference type="EMBL" id="AP008209">
    <property type="protein sequence ID" value="BAF13779.1"/>
    <property type="molecule type" value="Genomic_DNA"/>
</dbReference>
<dbReference type="EMBL" id="AP014959">
    <property type="protein sequence ID" value="BAS87317.1"/>
    <property type="molecule type" value="Genomic_DNA"/>
</dbReference>
<dbReference type="EMBL" id="AK068216">
    <property type="protein sequence ID" value="BAG90805.1"/>
    <property type="molecule type" value="mRNA"/>
</dbReference>
<dbReference type="RefSeq" id="XP_015629685.1">
    <property type="nucleotide sequence ID" value="XM_015774199.1"/>
</dbReference>
<dbReference type="SMR" id="Q75LD5"/>
<dbReference type="FunCoup" id="Q75LD5">
    <property type="interactions" value="1"/>
</dbReference>
<dbReference type="STRING" id="39947.Q75LD5"/>
<dbReference type="PaxDb" id="39947-Q75LD5"/>
<dbReference type="EnsemblPlants" id="Os03t0843600-01">
    <property type="protein sequence ID" value="Os03t0843600-01"/>
    <property type="gene ID" value="Os03g0843600"/>
</dbReference>
<dbReference type="Gramene" id="Os03t0843600-01">
    <property type="protein sequence ID" value="Os03t0843600-01"/>
    <property type="gene ID" value="Os03g0843600"/>
</dbReference>
<dbReference type="KEGG" id="dosa:Os03g0843600"/>
<dbReference type="eggNOG" id="ENOG502QU6W">
    <property type="taxonomic scope" value="Eukaryota"/>
</dbReference>
<dbReference type="HOGENOM" id="CLU_012980_0_0_1"/>
<dbReference type="InParanoid" id="Q75LD5"/>
<dbReference type="OMA" id="VPEMDRE"/>
<dbReference type="OrthoDB" id="414047at2759"/>
<dbReference type="Proteomes" id="UP000000763">
    <property type="component" value="Chromosome 3"/>
</dbReference>
<dbReference type="Proteomes" id="UP000059680">
    <property type="component" value="Chromosome 3"/>
</dbReference>
<dbReference type="GO" id="GO:0031965">
    <property type="term" value="C:nuclear membrane"/>
    <property type="evidence" value="ECO:0007669"/>
    <property type="project" value="UniProtKB-SubCell"/>
</dbReference>
<dbReference type="GO" id="GO:0034220">
    <property type="term" value="P:monoatomic ion transmembrane transport"/>
    <property type="evidence" value="ECO:0007669"/>
    <property type="project" value="UniProtKB-KW"/>
</dbReference>
<dbReference type="Gene3D" id="3.40.50.720">
    <property type="entry name" value="NAD(P)-binding Rossmann-like Domain"/>
    <property type="match status" value="1"/>
</dbReference>
<dbReference type="InterPro" id="IPR044849">
    <property type="entry name" value="CASTOR/POLLUX/SYM8-like"/>
</dbReference>
<dbReference type="InterPro" id="IPR010420">
    <property type="entry name" value="CASTOR/POLLUX/SYM8_dom"/>
</dbReference>
<dbReference type="InterPro" id="IPR003148">
    <property type="entry name" value="RCK_N"/>
</dbReference>
<dbReference type="PANTHER" id="PTHR31563:SF1">
    <property type="entry name" value="ION CHANNEL CASTOR-RELATED"/>
    <property type="match status" value="1"/>
</dbReference>
<dbReference type="PANTHER" id="PTHR31563">
    <property type="entry name" value="ION CHANNEL POLLUX-RELATED"/>
    <property type="match status" value="1"/>
</dbReference>
<dbReference type="Pfam" id="PF06241">
    <property type="entry name" value="Castor_Poll_mid"/>
    <property type="match status" value="1"/>
</dbReference>
<dbReference type="Pfam" id="PF22614">
    <property type="entry name" value="Slo-like_RCK"/>
    <property type="match status" value="1"/>
</dbReference>
<dbReference type="SUPFAM" id="SSF81324">
    <property type="entry name" value="Voltage-gated potassium channels"/>
    <property type="match status" value="1"/>
</dbReference>
<dbReference type="PROSITE" id="PS51201">
    <property type="entry name" value="RCK_N"/>
    <property type="match status" value="2"/>
</dbReference>
<keyword id="KW-0175">Coiled coil</keyword>
<keyword id="KW-0407">Ion channel</keyword>
<keyword id="KW-0406">Ion transport</keyword>
<keyword id="KW-0472">Membrane</keyword>
<keyword id="KW-0539">Nucleus</keyword>
<keyword id="KW-1185">Reference proteome</keyword>
<keyword id="KW-0812">Transmembrane</keyword>
<keyword id="KW-1133">Transmembrane helix</keyword>
<keyword id="KW-0813">Transport</keyword>
<organism>
    <name type="scientific">Oryza sativa subsp. japonica</name>
    <name type="common">Rice</name>
    <dbReference type="NCBI Taxonomy" id="39947"/>
    <lineage>
        <taxon>Eukaryota</taxon>
        <taxon>Viridiplantae</taxon>
        <taxon>Streptophyta</taxon>
        <taxon>Embryophyta</taxon>
        <taxon>Tracheophyta</taxon>
        <taxon>Spermatophyta</taxon>
        <taxon>Magnoliopsida</taxon>
        <taxon>Liliopsida</taxon>
        <taxon>Poales</taxon>
        <taxon>Poaceae</taxon>
        <taxon>BOP clade</taxon>
        <taxon>Oryzoideae</taxon>
        <taxon>Oryzeae</taxon>
        <taxon>Oryzinae</taxon>
        <taxon>Oryza</taxon>
        <taxon>Oryza sativa</taxon>
    </lineage>
</organism>
<evidence type="ECO:0000250" key="1"/>
<evidence type="ECO:0000255" key="2"/>
<evidence type="ECO:0000255" key="3">
    <source>
        <dbReference type="PROSITE-ProRule" id="PRU00543"/>
    </source>
</evidence>
<evidence type="ECO:0000256" key="4">
    <source>
        <dbReference type="SAM" id="MobiDB-lite"/>
    </source>
</evidence>
<evidence type="ECO:0000269" key="5">
    <source>
    </source>
</evidence>
<evidence type="ECO:0000269" key="6">
    <source>
    </source>
</evidence>
<evidence type="ECO:0000305" key="7"/>
<sequence length="893" mass="98931">MPLDPDSSPAPPHRDWFFPPAPPFLPSSRARTPRAPFPSTSRSSNPYSFPDRRPPPTPRSRSRSPLPPPEQQKQQQPPPTTPPPAPRRRDPRYAGVRRGDVRTLTAEKAAAAAAVPTAAQVHGSKSAASATTLRWSGMVSVAAIVLCFSSLVRSNSSLHDQVHHLKAQLAEATTKLQSCITESSMDMSSILSYQSNNSTSQNRGLKNFSLLLSLSTLYAPLLILKYMDLFLKLRSSQDSEEEVPINKRLAYRVDIFLSLQPYAKPLVLLVATLLLIGLGGLALYGVNDDSLLDCLWLSWTFVADSGNHANAEGFGPKLVSVSISIGGMLVFAMMLGLVTDSISEKFDSLRKGRSEVIEQSHTLVLGWSDKLGSLLNQIAIANESLGGGTIVVMAEKDKEEMEADIAKMEFDLKGTAIICRSGSPLILADLKKVSVSKARAIVVLAEEGNADQSDARALRTVLSLTGVKEGLRGHIVVELSDLDNEVLVKLVGGDLVETVVAHDVIGRLMIQCARQPGLAQIWEDILGFENCEFYIKRWPQLDGMQFEDVLISFPDAIPCGIKVASYGGKIILNPDDFYVLQEGDEVLVIAEDDDTYAPAPLPKVMRGYLPKDFVVPKSPERILFCGWRRDMEDMIMVLDAFLAPGSELWMFNDVPEMDRERKLIDGGLDFSRLENITLVHREGNAVIRRHLESLPLESFDSILILADESVEDSAIQADSRSLATLLLIRDIQAKRLPFREAMVSHVTRGSFCEGSWIGEMQQASDKSVIISEILDPRTKNLLSVSKISDYVLSNELVSMALAMVAEDRQINDVLEELFAEQGNEMQIRPADLYLREDEELNFFEVMLRGRQRKEIVIGYRLVDAERAIINPPDKVSRRRWSAKDVFVVITEKE</sequence>
<protein>
    <recommendedName>
        <fullName>Probable ion channel CASTOR</fullName>
        <shortName>OsCASTOR</shortName>
    </recommendedName>
    <alternativeName>
        <fullName>Probable ion channel DMI1-like</fullName>
    </alternativeName>
</protein>